<reference key="1">
    <citation type="journal article" date="2008" name="J. Bacteriol.">
        <title>The complete genome sequence of Thermococcus onnurineus NA1 reveals a mixed heterotrophic and carboxydotrophic metabolism.</title>
        <authorList>
            <person name="Lee H.S."/>
            <person name="Kang S.G."/>
            <person name="Bae S.S."/>
            <person name="Lim J.K."/>
            <person name="Cho Y."/>
            <person name="Kim Y.J."/>
            <person name="Jeon J.H."/>
            <person name="Cha S.-S."/>
            <person name="Kwon K.K."/>
            <person name="Kim H.-T."/>
            <person name="Park C.-J."/>
            <person name="Lee H.-W."/>
            <person name="Kim S.I."/>
            <person name="Chun J."/>
            <person name="Colwell R.R."/>
            <person name="Kim S.-J."/>
            <person name="Lee J.-H."/>
        </authorList>
    </citation>
    <scope>NUCLEOTIDE SEQUENCE [LARGE SCALE GENOMIC DNA]</scope>
    <source>
        <strain>NA1</strain>
    </source>
</reference>
<keyword id="KW-0342">GTP-binding</keyword>
<keyword id="KW-0396">Initiation factor</keyword>
<keyword id="KW-0547">Nucleotide-binding</keyword>
<keyword id="KW-0648">Protein biosynthesis</keyword>
<evidence type="ECO:0000250" key="1"/>
<evidence type="ECO:0000255" key="2">
    <source>
        <dbReference type="HAMAP-Rule" id="MF_00100"/>
    </source>
</evidence>
<proteinExistence type="inferred from homology"/>
<organism>
    <name type="scientific">Thermococcus onnurineus (strain NA1)</name>
    <dbReference type="NCBI Taxonomy" id="523850"/>
    <lineage>
        <taxon>Archaea</taxon>
        <taxon>Methanobacteriati</taxon>
        <taxon>Methanobacteriota</taxon>
        <taxon>Thermococci</taxon>
        <taxon>Thermococcales</taxon>
        <taxon>Thermococcaceae</taxon>
        <taxon>Thermococcus</taxon>
    </lineage>
</organism>
<comment type="function">
    <text evidence="2">Function in general translation initiation by promoting the binding of the formylmethionine-tRNA to ribosomes. Seems to function along with eIF-2.</text>
</comment>
<comment type="similarity">
    <text evidence="2">Belongs to the TRAFAC class translation factor GTPase superfamily. Classic translation factor GTPase family. IF-2 subfamily.</text>
</comment>
<name>IF2P_THEON</name>
<sequence>MKRIRQPIIAVLGHVDHGKTTLLDRIRRTNVAGKEAGGITQHIGATEVPIETVKNLAGPLIKLWKGEIKLPGLLFIDTPGHEAFTSLRARGGSLADLAVLVVDINEGFQPQTIESIEILRKNRTPFIVAANKIDRIKGWKIEKDEPFLVNIKKQDQRAQQELETKLWELIGKFYEMGFQANRFDRVQNFTRELAIVPISAKYGIGVPELLVLIAGLSQKYLEEKLKIEVEGPARGTILEVREEIGLGTTIDVIIYDGTLHKDDTIVVGGKDKAIVTKIRALLKPKPLDEIRDPRFRFDQVDEVTAAAGVKIAAPGLEEALAGSPVIAARSEEEVEKAKQEILSQIQSVVISTGKVGVIVKADTLGSLEALSKELQEKNIPIRKADVGNISKTDVMEALSVKDEDPKYGVVLGFNVKVNEDAEEVAKARGVPIFTGNIIYKLIEDYEAWVKGEEEKKKRELLSKVTFPGVIRLYPDERYVFRRSHPAIVGIEVVEGRIRPGVTLIKQNGQKVGVIKSIKNRNDFVQEAKKGEAVAIAIEGAIVGRHIHPGETLYVDLSKNDVIILAKQLKNELDETDIKALKMTAKVKAQQDPFWKAV</sequence>
<dbReference type="EMBL" id="CP000855">
    <property type="protein sequence ID" value="ACJ16436.1"/>
    <property type="molecule type" value="Genomic_DNA"/>
</dbReference>
<dbReference type="RefSeq" id="WP_012571908.1">
    <property type="nucleotide sequence ID" value="NC_011529.1"/>
</dbReference>
<dbReference type="SMR" id="B6YWH3"/>
<dbReference type="STRING" id="523850.TON_0948"/>
<dbReference type="GeneID" id="7017251"/>
<dbReference type="KEGG" id="ton:TON_0948"/>
<dbReference type="PATRIC" id="fig|523850.10.peg.956"/>
<dbReference type="eggNOG" id="arCOG01560">
    <property type="taxonomic scope" value="Archaea"/>
</dbReference>
<dbReference type="HOGENOM" id="CLU_002656_3_3_2"/>
<dbReference type="OrthoDB" id="30957at2157"/>
<dbReference type="Proteomes" id="UP000002727">
    <property type="component" value="Chromosome"/>
</dbReference>
<dbReference type="GO" id="GO:0005737">
    <property type="term" value="C:cytoplasm"/>
    <property type="evidence" value="ECO:0007669"/>
    <property type="project" value="TreeGrafter"/>
</dbReference>
<dbReference type="GO" id="GO:0005525">
    <property type="term" value="F:GTP binding"/>
    <property type="evidence" value="ECO:0007669"/>
    <property type="project" value="UniProtKB-KW"/>
</dbReference>
<dbReference type="GO" id="GO:0003924">
    <property type="term" value="F:GTPase activity"/>
    <property type="evidence" value="ECO:0007669"/>
    <property type="project" value="UniProtKB-UniRule"/>
</dbReference>
<dbReference type="GO" id="GO:0003743">
    <property type="term" value="F:translation initiation factor activity"/>
    <property type="evidence" value="ECO:0007669"/>
    <property type="project" value="UniProtKB-UniRule"/>
</dbReference>
<dbReference type="CDD" id="cd03703">
    <property type="entry name" value="aeIF5B_II"/>
    <property type="match status" value="1"/>
</dbReference>
<dbReference type="CDD" id="cd16266">
    <property type="entry name" value="IF2_aeIF5B_IV"/>
    <property type="match status" value="1"/>
</dbReference>
<dbReference type="CDD" id="cd01887">
    <property type="entry name" value="IF2_eIF5B"/>
    <property type="match status" value="1"/>
</dbReference>
<dbReference type="FunFam" id="3.40.50.300:FF:000112">
    <property type="entry name" value="Eukaryotic translation initiation factor 5B"/>
    <property type="match status" value="1"/>
</dbReference>
<dbReference type="FunFam" id="2.40.30.10:FF:000013">
    <property type="entry name" value="eukaryotic translation initiation factor 5B"/>
    <property type="match status" value="1"/>
</dbReference>
<dbReference type="FunFam" id="3.40.50.10050:FF:000009">
    <property type="entry name" value="Probable translation initiation factor IF-2"/>
    <property type="match status" value="1"/>
</dbReference>
<dbReference type="Gene3D" id="3.40.50.300">
    <property type="entry name" value="P-loop containing nucleotide triphosphate hydrolases"/>
    <property type="match status" value="1"/>
</dbReference>
<dbReference type="Gene3D" id="2.40.30.10">
    <property type="entry name" value="Translation factors"/>
    <property type="match status" value="2"/>
</dbReference>
<dbReference type="Gene3D" id="3.40.50.10050">
    <property type="entry name" value="Translation initiation factor IF- 2, domain 3"/>
    <property type="match status" value="1"/>
</dbReference>
<dbReference type="HAMAP" id="MF_00100_A">
    <property type="entry name" value="IF_2_A"/>
    <property type="match status" value="1"/>
</dbReference>
<dbReference type="InterPro" id="IPR004161">
    <property type="entry name" value="EFTu-like_2"/>
</dbReference>
<dbReference type="InterPro" id="IPR029459">
    <property type="entry name" value="EFTU-type"/>
</dbReference>
<dbReference type="InterPro" id="IPR027417">
    <property type="entry name" value="P-loop_NTPase"/>
</dbReference>
<dbReference type="InterPro" id="IPR005225">
    <property type="entry name" value="Small_GTP-bd"/>
</dbReference>
<dbReference type="InterPro" id="IPR000795">
    <property type="entry name" value="T_Tr_GTP-bd_dom"/>
</dbReference>
<dbReference type="InterPro" id="IPR004544">
    <property type="entry name" value="TF_aIF-2_arc"/>
</dbReference>
<dbReference type="InterPro" id="IPR015760">
    <property type="entry name" value="TIF_IF2"/>
</dbReference>
<dbReference type="InterPro" id="IPR023115">
    <property type="entry name" value="TIF_IF2_dom3"/>
</dbReference>
<dbReference type="InterPro" id="IPR036925">
    <property type="entry name" value="TIF_IF2_dom3_sf"/>
</dbReference>
<dbReference type="InterPro" id="IPR009000">
    <property type="entry name" value="Transl_B-barrel_sf"/>
</dbReference>
<dbReference type="NCBIfam" id="TIGR00491">
    <property type="entry name" value="aIF-2"/>
    <property type="match status" value="1"/>
</dbReference>
<dbReference type="NCBIfam" id="NF003078">
    <property type="entry name" value="PRK04004.1"/>
    <property type="match status" value="1"/>
</dbReference>
<dbReference type="NCBIfam" id="NF011418">
    <property type="entry name" value="PRK14845.1"/>
    <property type="match status" value="1"/>
</dbReference>
<dbReference type="NCBIfam" id="TIGR00231">
    <property type="entry name" value="small_GTP"/>
    <property type="match status" value="1"/>
</dbReference>
<dbReference type="PANTHER" id="PTHR43381:SF4">
    <property type="entry name" value="EUKARYOTIC TRANSLATION INITIATION FACTOR 5B"/>
    <property type="match status" value="1"/>
</dbReference>
<dbReference type="PANTHER" id="PTHR43381">
    <property type="entry name" value="TRANSLATION INITIATION FACTOR IF-2-RELATED"/>
    <property type="match status" value="1"/>
</dbReference>
<dbReference type="Pfam" id="PF00009">
    <property type="entry name" value="GTP_EFTU"/>
    <property type="match status" value="1"/>
</dbReference>
<dbReference type="Pfam" id="PF03144">
    <property type="entry name" value="GTP_EFTU_D2"/>
    <property type="match status" value="1"/>
</dbReference>
<dbReference type="Pfam" id="PF14578">
    <property type="entry name" value="GTP_EFTU_D4"/>
    <property type="match status" value="1"/>
</dbReference>
<dbReference type="Pfam" id="PF11987">
    <property type="entry name" value="IF-2"/>
    <property type="match status" value="1"/>
</dbReference>
<dbReference type="PRINTS" id="PR00315">
    <property type="entry name" value="ELONGATNFCT"/>
</dbReference>
<dbReference type="SUPFAM" id="SSF52156">
    <property type="entry name" value="Initiation factor IF2/eIF5b, domain 3"/>
    <property type="match status" value="1"/>
</dbReference>
<dbReference type="SUPFAM" id="SSF52540">
    <property type="entry name" value="P-loop containing nucleoside triphosphate hydrolases"/>
    <property type="match status" value="1"/>
</dbReference>
<dbReference type="SUPFAM" id="SSF50447">
    <property type="entry name" value="Translation proteins"/>
    <property type="match status" value="1"/>
</dbReference>
<dbReference type="PROSITE" id="PS51722">
    <property type="entry name" value="G_TR_2"/>
    <property type="match status" value="1"/>
</dbReference>
<feature type="chain" id="PRO_1000093837" description="Probable translation initiation factor IF-2">
    <location>
        <begin position="1"/>
        <end position="597"/>
    </location>
</feature>
<feature type="domain" description="tr-type G">
    <location>
        <begin position="4"/>
        <end position="221"/>
    </location>
</feature>
<feature type="region of interest" description="G1" evidence="1">
    <location>
        <begin position="13"/>
        <end position="20"/>
    </location>
</feature>
<feature type="region of interest" description="G2" evidence="1">
    <location>
        <begin position="38"/>
        <end position="42"/>
    </location>
</feature>
<feature type="region of interest" description="G3" evidence="1">
    <location>
        <begin position="77"/>
        <end position="80"/>
    </location>
</feature>
<feature type="region of interest" description="G4" evidence="1">
    <location>
        <begin position="131"/>
        <end position="134"/>
    </location>
</feature>
<feature type="region of interest" description="G5" evidence="1">
    <location>
        <begin position="199"/>
        <end position="201"/>
    </location>
</feature>
<feature type="binding site" evidence="2">
    <location>
        <begin position="13"/>
        <end position="20"/>
    </location>
    <ligand>
        <name>GTP</name>
        <dbReference type="ChEBI" id="CHEBI:37565"/>
    </ligand>
</feature>
<feature type="binding site" evidence="2">
    <location>
        <begin position="77"/>
        <end position="81"/>
    </location>
    <ligand>
        <name>GTP</name>
        <dbReference type="ChEBI" id="CHEBI:37565"/>
    </ligand>
</feature>
<feature type="binding site" evidence="2">
    <location>
        <begin position="131"/>
        <end position="134"/>
    </location>
    <ligand>
        <name>GTP</name>
        <dbReference type="ChEBI" id="CHEBI:37565"/>
    </ligand>
</feature>
<protein>
    <recommendedName>
        <fullName evidence="2">Probable translation initiation factor IF-2</fullName>
    </recommendedName>
</protein>
<accession>B6YWH3</accession>
<gene>
    <name evidence="2" type="primary">infB</name>
    <name type="ordered locus">TON_0948</name>
</gene>